<gene>
    <name type="primary">axhA</name>
    <name type="synonym">arf</name>
</gene>
<organism>
    <name type="scientific">Aspergillus sojae</name>
    <dbReference type="NCBI Taxonomy" id="41058"/>
    <lineage>
        <taxon>Eukaryota</taxon>
        <taxon>Fungi</taxon>
        <taxon>Dikarya</taxon>
        <taxon>Ascomycota</taxon>
        <taxon>Pezizomycotina</taxon>
        <taxon>Eurotiomycetes</taxon>
        <taxon>Eurotiomycetidae</taxon>
        <taxon>Eurotiales</taxon>
        <taxon>Aspergillaceae</taxon>
        <taxon>Aspergillus</taxon>
        <taxon>Aspergillus subgen. Circumdati</taxon>
    </lineage>
</organism>
<proteinExistence type="evidence at transcript level"/>
<sequence>MKVTKKVLDQSLCCTALLALVGGAAAQCALPSSYSWTSTGALAEPKAGWAALKDFTNVVFNGQHIVYGSVADTSGNYGSMNFGPFSDWSEMASASQNAMSQGTVAPTLFYFAPKDVWILAYQWGPTSFSYKTSSDPTDANGWSAAQPLFSGTISDSDTGVIDQTVIGDDTDMYLFFAGDNGKIYRASMPIDNFPGDFGTQSEIILSDTKENLFEAVQVYTVDGQNKYLMIVEAMGANGRYFRSFTADSLDGEWTVQAGTESQPFAGKANSGATWTNDISHGDLVRNNPDQTMTVDPCNLQLLYQGRDPNASGDYNLLPWKPGVLTLQV</sequence>
<protein>
    <recommendedName>
        <fullName>Alpha-L-arabinofuranosidase axhA</fullName>
        <ecNumber>3.2.1.55</ecNumber>
    </recommendedName>
    <alternativeName>
        <fullName>Arabinoxylan arabinofuranohydrolase axhA</fullName>
    </alternativeName>
</protein>
<comment type="function">
    <text evidence="3">Alpha-L-arabinofuranosidase involved in the hydrolysis of xylan, a major structural heterogeneous polysaccharide found in plant biomass representing the second most abundant polysaccharide in the biosphere, after cellulose. Releases L-arabinose from arabinoxylan.</text>
</comment>
<comment type="catalytic activity">
    <reaction>
        <text>Hydrolysis of terminal non-reducing alpha-L-arabinofuranoside residues in alpha-L-arabinosides.</text>
        <dbReference type="EC" id="3.2.1.55"/>
    </reaction>
</comment>
<comment type="subcellular location">
    <subcellularLocation>
        <location evidence="1">Secreted</location>
    </subcellularLocation>
</comment>
<comment type="similarity">
    <text evidence="4">Belongs to the glycosyl hydrolase 62 family.</text>
</comment>
<keyword id="KW-0119">Carbohydrate metabolism</keyword>
<keyword id="KW-0325">Glycoprotein</keyword>
<keyword id="KW-0326">Glycosidase</keyword>
<keyword id="KW-0378">Hydrolase</keyword>
<keyword id="KW-0624">Polysaccharide degradation</keyword>
<keyword id="KW-0964">Secreted</keyword>
<keyword id="KW-0732">Signal</keyword>
<keyword id="KW-0858">Xylan degradation</keyword>
<name>AXHA_ASPSO</name>
<dbReference type="EC" id="3.2.1.55"/>
<dbReference type="EMBL" id="AB033289">
    <property type="protein sequence ID" value="BAA85252.1"/>
    <property type="molecule type" value="mRNA"/>
</dbReference>
<dbReference type="SMR" id="Q9UVX6"/>
<dbReference type="CAZy" id="GH62">
    <property type="family name" value="Glycoside Hydrolase Family 62"/>
</dbReference>
<dbReference type="GlyCosmos" id="Q9UVX6">
    <property type="glycosylation" value="1 site, No reported glycans"/>
</dbReference>
<dbReference type="GO" id="GO:0005576">
    <property type="term" value="C:extracellular region"/>
    <property type="evidence" value="ECO:0007669"/>
    <property type="project" value="UniProtKB-SubCell"/>
</dbReference>
<dbReference type="GO" id="GO:0046556">
    <property type="term" value="F:alpha-L-arabinofuranosidase activity"/>
    <property type="evidence" value="ECO:0007669"/>
    <property type="project" value="UniProtKB-EC"/>
</dbReference>
<dbReference type="GO" id="GO:0046373">
    <property type="term" value="P:L-arabinose metabolic process"/>
    <property type="evidence" value="ECO:0007669"/>
    <property type="project" value="InterPro"/>
</dbReference>
<dbReference type="GO" id="GO:0045493">
    <property type="term" value="P:xylan catabolic process"/>
    <property type="evidence" value="ECO:0007669"/>
    <property type="project" value="UniProtKB-KW"/>
</dbReference>
<dbReference type="CDD" id="cd08987">
    <property type="entry name" value="GH62"/>
    <property type="match status" value="1"/>
</dbReference>
<dbReference type="Gene3D" id="2.115.10.20">
    <property type="entry name" value="Glycosyl hydrolase domain, family 43"/>
    <property type="match status" value="1"/>
</dbReference>
<dbReference type="InterPro" id="IPR005193">
    <property type="entry name" value="GH62_arabinosidase"/>
</dbReference>
<dbReference type="InterPro" id="IPR023296">
    <property type="entry name" value="Glyco_hydro_beta-prop_sf"/>
</dbReference>
<dbReference type="PANTHER" id="PTHR40631">
    <property type="entry name" value="ALPHA-L-ARABINOFURANOSIDASE AXHA-2-RELATED"/>
    <property type="match status" value="1"/>
</dbReference>
<dbReference type="PANTHER" id="PTHR40631:SF1">
    <property type="entry name" value="ALPHA-L-ARABINOFURANOSIDASE AXHA-2-RELATED"/>
    <property type="match status" value="1"/>
</dbReference>
<dbReference type="Pfam" id="PF03664">
    <property type="entry name" value="Glyco_hydro_62"/>
    <property type="match status" value="1"/>
</dbReference>
<dbReference type="SUPFAM" id="SSF75005">
    <property type="entry name" value="Arabinanase/levansucrase/invertase"/>
    <property type="match status" value="1"/>
</dbReference>
<feature type="signal peptide" evidence="2">
    <location>
        <begin position="1"/>
        <end position="26"/>
    </location>
</feature>
<feature type="chain" id="PRO_5000049467" description="Alpha-L-arabinofuranosidase axhA">
    <location>
        <begin position="27"/>
        <end position="328"/>
    </location>
</feature>
<feature type="glycosylation site" description="N-linked (GlcNAc...) asparagine" evidence="2">
    <location>
        <position position="309"/>
    </location>
</feature>
<evidence type="ECO:0000250" key="1"/>
<evidence type="ECO:0000255" key="2"/>
<evidence type="ECO:0000269" key="3">
    <source>
    </source>
</evidence>
<evidence type="ECO:0000305" key="4"/>
<accession>Q9UVX6</accession>
<reference key="1">
    <citation type="journal article" date="2000" name="J. Biosci. Bioeng.">
        <title>Cloning, sequencing and expression of an alpha-L-arabinofuranosidase from Aspergillus sojae.</title>
        <authorList>
            <person name="Kimura I."/>
            <person name="Yoshioka N."/>
            <person name="Kimura Y."/>
            <person name="Tajima S."/>
        </authorList>
    </citation>
    <scope>NUCLEOTIDE SEQUENCE [MRNA]</scope>
    <scope>FUNCTION</scope>
</reference>